<keyword id="KW-0169">Cobalamin biosynthesis</keyword>
<keyword id="KW-0456">Lyase</keyword>
<keyword id="KW-0489">Methyltransferase</keyword>
<keyword id="KW-0511">Multifunctional enzyme</keyword>
<keyword id="KW-0520">NAD</keyword>
<keyword id="KW-0560">Oxidoreductase</keyword>
<keyword id="KW-0597">Phosphoprotein</keyword>
<keyword id="KW-0627">Porphyrin biosynthesis</keyword>
<keyword id="KW-0949">S-adenosyl-L-methionine</keyword>
<keyword id="KW-0808">Transferase</keyword>
<name>CYSG_PSEAB</name>
<accession>Q02NA3</accession>
<protein>
    <recommendedName>
        <fullName evidence="1">Siroheme synthase</fullName>
    </recommendedName>
    <domain>
        <recommendedName>
            <fullName evidence="1">Uroporphyrinogen-III C-methyltransferase</fullName>
            <shortName evidence="1">Urogen III methylase</shortName>
            <ecNumber evidence="1">2.1.1.107</ecNumber>
        </recommendedName>
        <alternativeName>
            <fullName evidence="1">SUMT</fullName>
        </alternativeName>
        <alternativeName>
            <fullName evidence="1">Uroporphyrinogen III methylase</fullName>
            <shortName evidence="1">UROM</shortName>
        </alternativeName>
    </domain>
    <domain>
        <recommendedName>
            <fullName evidence="1">Precorrin-2 dehydrogenase</fullName>
            <ecNumber evidence="1">1.3.1.76</ecNumber>
        </recommendedName>
    </domain>
    <domain>
        <recommendedName>
            <fullName evidence="1">Sirohydrochlorin ferrochelatase</fullName>
            <ecNumber evidence="1">4.99.1.4</ecNumber>
        </recommendedName>
    </domain>
</protein>
<sequence>MDFLPLFHSLQGRLALVVGGGEVALRKARLLADAGARLRVVAPQIHIELRHLVEQGGGELLERDYQDGDQPGCALIIAATDDEPLNAEVSRAANARGIPVNVVDAPALCSVIFPAIVDRSPLVVAVSSGGDAPVLARLIRAKLETWIPSTYGQLAGLASRFRHRVKELLPDLQQRRVFWENLFQGEIAERVLAGRPAEAERLLEERLAGGLAHIATGEVYLVGAGPGDPDLLTFRALRLMQQADVVLYDRLVAPSILELCRRDAERLYVGKRRAEHAVPQDRINRLLVELASQGKRVLRLKGGDPFIFGRGGEEIDELAARGIPFQVVPGITAASGCAAYAGIPLTHRDHAQSVRFVTGHLKDGTTDLPWQDLVAPGQTLVFYMGLVGLPVICEQLVAHGRSAQTPAALIQQGTTAQQRVFTGTLENLPQLVAEHEVHAPTLVIVGEVVQLRDKLAWFEGAREDA</sequence>
<comment type="function">
    <text evidence="1">Multifunctional enzyme that catalyzes the SAM-dependent methylations of uroporphyrinogen III at position C-2 and C-7 to form precorrin-2 via precorrin-1. Then it catalyzes the NAD-dependent ring dehydrogenation of precorrin-2 to yield sirohydrochlorin. Finally, it catalyzes the ferrochelation of sirohydrochlorin to yield siroheme.</text>
</comment>
<comment type="catalytic activity">
    <reaction evidence="1">
        <text>uroporphyrinogen III + 2 S-adenosyl-L-methionine = precorrin-2 + 2 S-adenosyl-L-homocysteine + H(+)</text>
        <dbReference type="Rhea" id="RHEA:32459"/>
        <dbReference type="ChEBI" id="CHEBI:15378"/>
        <dbReference type="ChEBI" id="CHEBI:57308"/>
        <dbReference type="ChEBI" id="CHEBI:57856"/>
        <dbReference type="ChEBI" id="CHEBI:58827"/>
        <dbReference type="ChEBI" id="CHEBI:59789"/>
        <dbReference type="EC" id="2.1.1.107"/>
    </reaction>
</comment>
<comment type="catalytic activity">
    <reaction evidence="1">
        <text>precorrin-2 + NAD(+) = sirohydrochlorin + NADH + 2 H(+)</text>
        <dbReference type="Rhea" id="RHEA:15613"/>
        <dbReference type="ChEBI" id="CHEBI:15378"/>
        <dbReference type="ChEBI" id="CHEBI:57540"/>
        <dbReference type="ChEBI" id="CHEBI:57945"/>
        <dbReference type="ChEBI" id="CHEBI:58351"/>
        <dbReference type="ChEBI" id="CHEBI:58827"/>
        <dbReference type="EC" id="1.3.1.76"/>
    </reaction>
</comment>
<comment type="catalytic activity">
    <reaction evidence="1">
        <text>siroheme + 2 H(+) = sirohydrochlorin + Fe(2+)</text>
        <dbReference type="Rhea" id="RHEA:24360"/>
        <dbReference type="ChEBI" id="CHEBI:15378"/>
        <dbReference type="ChEBI" id="CHEBI:29033"/>
        <dbReference type="ChEBI" id="CHEBI:58351"/>
        <dbReference type="ChEBI" id="CHEBI:60052"/>
        <dbReference type="EC" id="4.99.1.4"/>
    </reaction>
</comment>
<comment type="pathway">
    <text evidence="1">Cofactor biosynthesis; adenosylcobalamin biosynthesis; precorrin-2 from uroporphyrinogen III: step 1/1.</text>
</comment>
<comment type="pathway">
    <text evidence="1">Cofactor biosynthesis; adenosylcobalamin biosynthesis; sirohydrochlorin from precorrin-2: step 1/1.</text>
</comment>
<comment type="pathway">
    <text evidence="1">Porphyrin-containing compound metabolism; siroheme biosynthesis; precorrin-2 from uroporphyrinogen III: step 1/1.</text>
</comment>
<comment type="pathway">
    <text evidence="1">Porphyrin-containing compound metabolism; siroheme biosynthesis; siroheme from sirohydrochlorin: step 1/1.</text>
</comment>
<comment type="pathway">
    <text evidence="1">Porphyrin-containing compound metabolism; siroheme biosynthesis; sirohydrochlorin from precorrin-2: step 1/1.</text>
</comment>
<comment type="similarity">
    <text evidence="1">In the N-terminal section; belongs to the precorrin-2 dehydrogenase / sirohydrochlorin ferrochelatase family.</text>
</comment>
<comment type="similarity">
    <text evidence="1">In the C-terminal section; belongs to the precorrin methyltransferase family.</text>
</comment>
<dbReference type="EC" id="2.1.1.107" evidence="1"/>
<dbReference type="EC" id="1.3.1.76" evidence="1"/>
<dbReference type="EC" id="4.99.1.4" evidence="1"/>
<dbReference type="EMBL" id="CP000438">
    <property type="protein sequence ID" value="ABJ11834.1"/>
    <property type="molecule type" value="Genomic_DNA"/>
</dbReference>
<dbReference type="RefSeq" id="WP_003138949.1">
    <property type="nucleotide sequence ID" value="NZ_CP034244.1"/>
</dbReference>
<dbReference type="SMR" id="Q02NA3"/>
<dbReference type="KEGG" id="pau:PA14_30340"/>
<dbReference type="PseudoCAP" id="PA14_30340"/>
<dbReference type="HOGENOM" id="CLU_011276_2_1_6"/>
<dbReference type="BioCyc" id="PAER208963:G1G74-2540-MONOMER"/>
<dbReference type="UniPathway" id="UPA00148">
    <property type="reaction ID" value="UER00211"/>
</dbReference>
<dbReference type="UniPathway" id="UPA00148">
    <property type="reaction ID" value="UER00222"/>
</dbReference>
<dbReference type="UniPathway" id="UPA00262">
    <property type="reaction ID" value="UER00211"/>
</dbReference>
<dbReference type="UniPathway" id="UPA00262">
    <property type="reaction ID" value="UER00222"/>
</dbReference>
<dbReference type="UniPathway" id="UPA00262">
    <property type="reaction ID" value="UER00376"/>
</dbReference>
<dbReference type="Proteomes" id="UP000000653">
    <property type="component" value="Chromosome"/>
</dbReference>
<dbReference type="GO" id="GO:0051287">
    <property type="term" value="F:NAD binding"/>
    <property type="evidence" value="ECO:0007669"/>
    <property type="project" value="InterPro"/>
</dbReference>
<dbReference type="GO" id="GO:0043115">
    <property type="term" value="F:precorrin-2 dehydrogenase activity"/>
    <property type="evidence" value="ECO:0007669"/>
    <property type="project" value="UniProtKB-UniRule"/>
</dbReference>
<dbReference type="GO" id="GO:0051266">
    <property type="term" value="F:sirohydrochlorin ferrochelatase activity"/>
    <property type="evidence" value="ECO:0007669"/>
    <property type="project" value="UniProtKB-EC"/>
</dbReference>
<dbReference type="GO" id="GO:0004851">
    <property type="term" value="F:uroporphyrin-III C-methyltransferase activity"/>
    <property type="evidence" value="ECO:0007669"/>
    <property type="project" value="UniProtKB-UniRule"/>
</dbReference>
<dbReference type="GO" id="GO:0009236">
    <property type="term" value="P:cobalamin biosynthetic process"/>
    <property type="evidence" value="ECO:0007669"/>
    <property type="project" value="UniProtKB-UniRule"/>
</dbReference>
<dbReference type="GO" id="GO:0032259">
    <property type="term" value="P:methylation"/>
    <property type="evidence" value="ECO:0007669"/>
    <property type="project" value="UniProtKB-KW"/>
</dbReference>
<dbReference type="GO" id="GO:0019354">
    <property type="term" value="P:siroheme biosynthetic process"/>
    <property type="evidence" value="ECO:0007669"/>
    <property type="project" value="UniProtKB-UniRule"/>
</dbReference>
<dbReference type="CDD" id="cd11642">
    <property type="entry name" value="SUMT"/>
    <property type="match status" value="1"/>
</dbReference>
<dbReference type="FunFam" id="3.30.160.110:FF:000001">
    <property type="entry name" value="Siroheme synthase"/>
    <property type="match status" value="1"/>
</dbReference>
<dbReference type="FunFam" id="3.30.950.10:FF:000001">
    <property type="entry name" value="Siroheme synthase"/>
    <property type="match status" value="1"/>
</dbReference>
<dbReference type="FunFam" id="3.40.1010.10:FF:000001">
    <property type="entry name" value="Siroheme synthase"/>
    <property type="match status" value="1"/>
</dbReference>
<dbReference type="Gene3D" id="3.40.1010.10">
    <property type="entry name" value="Cobalt-precorrin-4 Transmethylase, Domain 1"/>
    <property type="match status" value="1"/>
</dbReference>
<dbReference type="Gene3D" id="3.30.950.10">
    <property type="entry name" value="Methyltransferase, Cobalt-precorrin-4 Transmethylase, Domain 2"/>
    <property type="match status" value="1"/>
</dbReference>
<dbReference type="Gene3D" id="3.40.50.720">
    <property type="entry name" value="NAD(P)-binding Rossmann-like Domain"/>
    <property type="match status" value="1"/>
</dbReference>
<dbReference type="Gene3D" id="1.10.8.210">
    <property type="entry name" value="Sirohaem synthase, dimerisation domain"/>
    <property type="match status" value="1"/>
</dbReference>
<dbReference type="Gene3D" id="3.30.160.110">
    <property type="entry name" value="Siroheme synthase, domain 2"/>
    <property type="match status" value="1"/>
</dbReference>
<dbReference type="HAMAP" id="MF_01646">
    <property type="entry name" value="Siroheme_synth"/>
    <property type="match status" value="1"/>
</dbReference>
<dbReference type="InterPro" id="IPR000878">
    <property type="entry name" value="4pyrrol_Mease"/>
</dbReference>
<dbReference type="InterPro" id="IPR035996">
    <property type="entry name" value="4pyrrol_Methylase_sf"/>
</dbReference>
<dbReference type="InterPro" id="IPR014777">
    <property type="entry name" value="4pyrrole_Mease_sub1"/>
</dbReference>
<dbReference type="InterPro" id="IPR014776">
    <property type="entry name" value="4pyrrole_Mease_sub2"/>
</dbReference>
<dbReference type="InterPro" id="IPR006366">
    <property type="entry name" value="CobA/CysG_C"/>
</dbReference>
<dbReference type="InterPro" id="IPR036291">
    <property type="entry name" value="NAD(P)-bd_dom_sf"/>
</dbReference>
<dbReference type="InterPro" id="IPR050161">
    <property type="entry name" value="Siro_Cobalamin_biosynth"/>
</dbReference>
<dbReference type="InterPro" id="IPR037115">
    <property type="entry name" value="Sirohaem_synt_dimer_dom_sf"/>
</dbReference>
<dbReference type="InterPro" id="IPR012409">
    <property type="entry name" value="Sirohaem_synth"/>
</dbReference>
<dbReference type="InterPro" id="IPR028281">
    <property type="entry name" value="Sirohaem_synthase_central"/>
</dbReference>
<dbReference type="InterPro" id="IPR019478">
    <property type="entry name" value="Sirohaem_synthase_dimer_dom"/>
</dbReference>
<dbReference type="InterPro" id="IPR006367">
    <property type="entry name" value="Sirohaem_synthase_N"/>
</dbReference>
<dbReference type="InterPro" id="IPR003043">
    <property type="entry name" value="Uropor_MeTrfase_CS"/>
</dbReference>
<dbReference type="NCBIfam" id="TIGR01469">
    <property type="entry name" value="cobA_cysG_Cterm"/>
    <property type="match status" value="1"/>
</dbReference>
<dbReference type="NCBIfam" id="TIGR01470">
    <property type="entry name" value="cysG_Nterm"/>
    <property type="match status" value="1"/>
</dbReference>
<dbReference type="NCBIfam" id="NF004790">
    <property type="entry name" value="PRK06136.1"/>
    <property type="match status" value="1"/>
</dbReference>
<dbReference type="NCBIfam" id="NF007922">
    <property type="entry name" value="PRK10637.1"/>
    <property type="match status" value="1"/>
</dbReference>
<dbReference type="PANTHER" id="PTHR45790:SF1">
    <property type="entry name" value="SIROHEME SYNTHASE"/>
    <property type="match status" value="1"/>
</dbReference>
<dbReference type="PANTHER" id="PTHR45790">
    <property type="entry name" value="SIROHEME SYNTHASE-RELATED"/>
    <property type="match status" value="1"/>
</dbReference>
<dbReference type="Pfam" id="PF10414">
    <property type="entry name" value="CysG_dimeriser"/>
    <property type="match status" value="1"/>
</dbReference>
<dbReference type="Pfam" id="PF13241">
    <property type="entry name" value="NAD_binding_7"/>
    <property type="match status" value="1"/>
</dbReference>
<dbReference type="Pfam" id="PF14824">
    <property type="entry name" value="Sirohm_synth_M"/>
    <property type="match status" value="1"/>
</dbReference>
<dbReference type="Pfam" id="PF00590">
    <property type="entry name" value="TP_methylase"/>
    <property type="match status" value="1"/>
</dbReference>
<dbReference type="PIRSF" id="PIRSF036426">
    <property type="entry name" value="Sirohaem_synth"/>
    <property type="match status" value="1"/>
</dbReference>
<dbReference type="SUPFAM" id="SSF51735">
    <property type="entry name" value="NAD(P)-binding Rossmann-fold domains"/>
    <property type="match status" value="1"/>
</dbReference>
<dbReference type="SUPFAM" id="SSF75615">
    <property type="entry name" value="Siroheme synthase middle domains-like"/>
    <property type="match status" value="1"/>
</dbReference>
<dbReference type="SUPFAM" id="SSF53790">
    <property type="entry name" value="Tetrapyrrole methylase"/>
    <property type="match status" value="1"/>
</dbReference>
<dbReference type="PROSITE" id="PS00840">
    <property type="entry name" value="SUMT_2"/>
    <property type="match status" value="1"/>
</dbReference>
<organism>
    <name type="scientific">Pseudomonas aeruginosa (strain UCBPP-PA14)</name>
    <dbReference type="NCBI Taxonomy" id="208963"/>
    <lineage>
        <taxon>Bacteria</taxon>
        <taxon>Pseudomonadati</taxon>
        <taxon>Pseudomonadota</taxon>
        <taxon>Gammaproteobacteria</taxon>
        <taxon>Pseudomonadales</taxon>
        <taxon>Pseudomonadaceae</taxon>
        <taxon>Pseudomonas</taxon>
    </lineage>
</organism>
<feature type="chain" id="PRO_0000330535" description="Siroheme synthase">
    <location>
        <begin position="1"/>
        <end position="465"/>
    </location>
</feature>
<feature type="region of interest" description="Precorrin-2 dehydrogenase /sirohydrochlorin ferrochelatase" evidence="1">
    <location>
        <begin position="1"/>
        <end position="203"/>
    </location>
</feature>
<feature type="region of interest" description="Uroporphyrinogen-III C-methyltransferase" evidence="1">
    <location>
        <begin position="217"/>
        <end position="465"/>
    </location>
</feature>
<feature type="active site" description="Proton acceptor" evidence="1">
    <location>
        <position position="249"/>
    </location>
</feature>
<feature type="active site" description="Proton donor" evidence="1">
    <location>
        <position position="271"/>
    </location>
</feature>
<feature type="binding site" evidence="1">
    <location>
        <begin position="22"/>
        <end position="23"/>
    </location>
    <ligand>
        <name>NAD(+)</name>
        <dbReference type="ChEBI" id="CHEBI:57540"/>
    </ligand>
</feature>
<feature type="binding site" evidence="1">
    <location>
        <begin position="43"/>
        <end position="44"/>
    </location>
    <ligand>
        <name>NAD(+)</name>
        <dbReference type="ChEBI" id="CHEBI:57540"/>
    </ligand>
</feature>
<feature type="binding site" evidence="1">
    <location>
        <position position="226"/>
    </location>
    <ligand>
        <name>S-adenosyl-L-methionine</name>
        <dbReference type="ChEBI" id="CHEBI:59789"/>
    </ligand>
</feature>
<feature type="binding site" evidence="1">
    <location>
        <begin position="302"/>
        <end position="304"/>
    </location>
    <ligand>
        <name>S-adenosyl-L-methionine</name>
        <dbReference type="ChEBI" id="CHEBI:59789"/>
    </ligand>
</feature>
<feature type="binding site" evidence="1">
    <location>
        <position position="307"/>
    </location>
    <ligand>
        <name>S-adenosyl-L-methionine</name>
        <dbReference type="ChEBI" id="CHEBI:59789"/>
    </ligand>
</feature>
<feature type="binding site" evidence="1">
    <location>
        <begin position="332"/>
        <end position="333"/>
    </location>
    <ligand>
        <name>S-adenosyl-L-methionine</name>
        <dbReference type="ChEBI" id="CHEBI:59789"/>
    </ligand>
</feature>
<feature type="binding site" evidence="1">
    <location>
        <position position="384"/>
    </location>
    <ligand>
        <name>S-adenosyl-L-methionine</name>
        <dbReference type="ChEBI" id="CHEBI:59789"/>
    </ligand>
</feature>
<feature type="binding site" evidence="1">
    <location>
        <position position="413"/>
    </location>
    <ligand>
        <name>S-adenosyl-L-methionine</name>
        <dbReference type="ChEBI" id="CHEBI:59789"/>
    </ligand>
</feature>
<feature type="modified residue" description="Phosphoserine" evidence="1">
    <location>
        <position position="128"/>
    </location>
</feature>
<reference key="1">
    <citation type="journal article" date="2006" name="Genome Biol.">
        <title>Genomic analysis reveals that Pseudomonas aeruginosa virulence is combinatorial.</title>
        <authorList>
            <person name="Lee D.G."/>
            <person name="Urbach J.M."/>
            <person name="Wu G."/>
            <person name="Liberati N.T."/>
            <person name="Feinbaum R.L."/>
            <person name="Miyata S."/>
            <person name="Diggins L.T."/>
            <person name="He J."/>
            <person name="Saucier M."/>
            <person name="Deziel E."/>
            <person name="Friedman L."/>
            <person name="Li L."/>
            <person name="Grills G."/>
            <person name="Montgomery K."/>
            <person name="Kucherlapati R."/>
            <person name="Rahme L.G."/>
            <person name="Ausubel F.M."/>
        </authorList>
    </citation>
    <scope>NUCLEOTIDE SEQUENCE [LARGE SCALE GENOMIC DNA]</scope>
    <source>
        <strain>UCBPP-PA14</strain>
    </source>
</reference>
<proteinExistence type="inferred from homology"/>
<gene>
    <name evidence="1" type="primary">cysG</name>
    <name type="ordered locus">PA14_30340</name>
</gene>
<evidence type="ECO:0000255" key="1">
    <source>
        <dbReference type="HAMAP-Rule" id="MF_01646"/>
    </source>
</evidence>